<feature type="signal peptide" evidence="2">
    <location>
        <begin position="1"/>
        <end position="22"/>
    </location>
</feature>
<feature type="propeptide" id="PRO_0000421859" evidence="2 4">
    <location>
        <begin position="23"/>
        <end position="51"/>
    </location>
</feature>
<feature type="peptide" id="PRO_5000666360" description="Kassorin-M">
    <location>
        <begin position="52"/>
        <end position="64"/>
    </location>
</feature>
<feature type="region of interest" description="Disordered" evidence="3">
    <location>
        <begin position="24"/>
        <end position="45"/>
    </location>
</feature>
<feature type="modified residue" description="Leucine amide" evidence="4">
    <location>
        <position position="64"/>
    </location>
</feature>
<keyword id="KW-0027">Amidation</keyword>
<keyword id="KW-0878">Amphibian defense peptide</keyword>
<keyword id="KW-0165">Cleavage on pair of basic residues</keyword>
<keyword id="KW-0964">Secreted</keyword>
<keyword id="KW-0732">Signal</keyword>
<sequence>MLTLKKSMLLLFFLGMVSFSLADDKREDEAEEGEDKRADEGEEKRAAEKKRFLEGLLNTVTGLLG</sequence>
<accession>E4Z7G0</accession>
<evidence type="ECO:0000250" key="1">
    <source>
        <dbReference type="UniProtKB" id="P82269"/>
    </source>
</evidence>
<evidence type="ECO:0000255" key="2"/>
<evidence type="ECO:0000256" key="3">
    <source>
        <dbReference type="SAM" id="MobiDB-lite"/>
    </source>
</evidence>
<evidence type="ECO:0000269" key="4">
    <source>
    </source>
</evidence>
<evidence type="ECO:0000305" key="5"/>
<evidence type="ECO:0000312" key="6">
    <source>
        <dbReference type="EMBL" id="CBK52153.1"/>
    </source>
</evidence>
<proteinExistence type="evidence at protein level"/>
<reference evidence="5 6" key="1">
    <citation type="journal article" date="2011" name="Mol. Immunol.">
        <title>Kassorins: novel innate immune system peptides from skin secretions of the African hyperoliid frogs, Kassina maculata and Kassina senegalensis.</title>
        <authorList>
            <person name="Chen H."/>
            <person name="Wang L."/>
            <person name="Zeller M."/>
            <person name="Hornshaw M."/>
            <person name="Wu Y."/>
            <person name="Zhou M."/>
            <person name="Li J."/>
            <person name="Hang X."/>
            <person name="Cai J."/>
            <person name="Chen T."/>
            <person name="Shaw C."/>
        </authorList>
    </citation>
    <scope>NUCLEOTIDE SEQUENCE [MRNA]</scope>
    <scope>FUNCTION</scope>
    <scope>SUBCELLULAR LOCATION</scope>
    <scope>AMIDATION AT LEU-64</scope>
    <scope>MASS SPECTROMETRY</scope>
    <source>
        <tissue evidence="6">Skin</tissue>
    </source>
</reference>
<dbReference type="EMBL" id="FN687445">
    <property type="protein sequence ID" value="CBK52153.1"/>
    <property type="molecule type" value="mRNA"/>
</dbReference>
<dbReference type="GO" id="GO:0005576">
    <property type="term" value="C:extracellular region"/>
    <property type="evidence" value="ECO:0007669"/>
    <property type="project" value="UniProtKB-SubCell"/>
</dbReference>
<dbReference type="GO" id="GO:0006952">
    <property type="term" value="P:defense response"/>
    <property type="evidence" value="ECO:0007669"/>
    <property type="project" value="UniProtKB-KW"/>
</dbReference>
<dbReference type="InterPro" id="IPR004275">
    <property type="entry name" value="Frog_antimicrobial_propeptide"/>
</dbReference>
<dbReference type="Pfam" id="PF03032">
    <property type="entry name" value="FSAP_sig_propep"/>
    <property type="match status" value="1"/>
</dbReference>
<comment type="function">
    <text evidence="4">Induces contraction of smooth muscle in isolated guinea pig urinary bladder (EC50=4.66 nM). Has no antimicrobial activity against the Gram-positive bacterium S.aureus, the Gram-negative bacterium E.coli and the yeast C.albicans. Elicits histamine release from rat peritoneal mast cells.</text>
</comment>
<comment type="subcellular location">
    <subcellularLocation>
        <location evidence="4">Secreted</location>
    </subcellularLocation>
</comment>
<comment type="tissue specificity">
    <text evidence="4">Expressed by the skin glands.</text>
</comment>
<comment type="mass spectrometry">
    <text>With amidation.</text>
</comment>
<comment type="similarity">
    <text evidence="1">Belongs to the frog skin active peptide (FSAP) family. Brevinin subfamily.</text>
</comment>
<organism>
    <name type="scientific">Phlyctimantis maculatus</name>
    <name type="common">Red-legged running frog</name>
    <name type="synonym">Hylambates maculatus</name>
    <dbReference type="NCBI Taxonomy" id="2517390"/>
    <lineage>
        <taxon>Eukaryota</taxon>
        <taxon>Metazoa</taxon>
        <taxon>Chordata</taxon>
        <taxon>Craniata</taxon>
        <taxon>Vertebrata</taxon>
        <taxon>Euteleostomi</taxon>
        <taxon>Amphibia</taxon>
        <taxon>Batrachia</taxon>
        <taxon>Anura</taxon>
        <taxon>Neobatrachia</taxon>
        <taxon>Microhyloidea</taxon>
        <taxon>Hyperoliidae</taxon>
        <taxon>Kassina</taxon>
    </lineage>
</organism>
<protein>
    <recommendedName>
        <fullName>Kassorin-M</fullName>
    </recommendedName>
    <alternativeName>
        <fullName>PreproKassorin-M</fullName>
    </alternativeName>
</protein>
<name>KASSO_PHLMA</name>